<proteinExistence type="evidence at transcript level"/>
<protein>
    <recommendedName>
        <fullName>Potassium channel toxin alpha-KTx Tx773</fullName>
    </recommendedName>
</protein>
<dbReference type="EMBL" id="FJ360834">
    <property type="protein sequence ID" value="ACJ23154.1"/>
    <property type="molecule type" value="mRNA"/>
</dbReference>
<dbReference type="SMR" id="B8XH45"/>
<dbReference type="GO" id="GO:0005576">
    <property type="term" value="C:extracellular region"/>
    <property type="evidence" value="ECO:0007669"/>
    <property type="project" value="UniProtKB-SubCell"/>
</dbReference>
<dbReference type="GO" id="GO:0015459">
    <property type="term" value="F:potassium channel regulator activity"/>
    <property type="evidence" value="ECO:0007669"/>
    <property type="project" value="UniProtKB-KW"/>
</dbReference>
<dbReference type="GO" id="GO:0090729">
    <property type="term" value="F:toxin activity"/>
    <property type="evidence" value="ECO:0007669"/>
    <property type="project" value="UniProtKB-KW"/>
</dbReference>
<keyword id="KW-1015">Disulfide bond</keyword>
<keyword id="KW-0872">Ion channel impairing toxin</keyword>
<keyword id="KW-0528">Neurotoxin</keyword>
<keyword id="KW-0632">Potassium channel impairing toxin</keyword>
<keyword id="KW-0964">Secreted</keyword>
<keyword id="KW-0732">Signal</keyword>
<keyword id="KW-0800">Toxin</keyword>
<sequence length="62" mass="7272">MQKLFIVLLLFCILRLDAEVDGRRATFCKQPGCQEACKKENKNGRCVDKFDNNFSYNICRCY</sequence>
<reference key="1">
    <citation type="submission" date="2008-10" db="EMBL/GenBank/DDBJ databases">
        <title>Buthus occitanus israelis scorpion toxin.</title>
        <authorList>
            <person name="Zilberberg N."/>
            <person name="Kozminsky-Atias A."/>
        </authorList>
    </citation>
    <scope>NUCLEOTIDE SEQUENCE [MRNA]</scope>
</reference>
<reference key="2">
    <citation type="journal article" date="2012" name="Peptides">
        <title>Identification and molecular characterization of three new K(+)-channel specific toxins from the Chinese scorpion Mesobuthus martensii Karsch revealing intronic number polymorphism and alternative splicing in duplicated genes.</title>
        <authorList>
            <person name="Zeng X.C."/>
            <person name="Zhang L."/>
            <person name="Nie Y."/>
            <person name="Luo X."/>
        </authorList>
    </citation>
    <scope>NOMENCLATURE</scope>
</reference>
<feature type="signal peptide" evidence="2">
    <location>
        <begin position="1"/>
        <end position="18"/>
    </location>
</feature>
<feature type="chain" id="PRO_0000417441" description="Potassium channel toxin alpha-KTx Tx773">
    <location>
        <begin position="19"/>
        <end position="62"/>
    </location>
</feature>
<feature type="site" description="Basic residue of the functional dyad" evidence="1">
    <location>
        <position position="45"/>
    </location>
</feature>
<feature type="site" description="Aromatic residue of the functional dyad" evidence="1">
    <location>
        <position position="62"/>
    </location>
</feature>
<feature type="disulfide bond" evidence="2">
    <location>
        <begin position="28"/>
        <end position="46"/>
    </location>
</feature>
<feature type="disulfide bond" evidence="2">
    <location>
        <begin position="33"/>
        <end position="59"/>
    </location>
</feature>
<feature type="disulfide bond" evidence="2">
    <location>
        <begin position="37"/>
        <end position="61"/>
    </location>
</feature>
<organism>
    <name type="scientific">Buthus israelis</name>
    <name type="common">Israeli scorpion</name>
    <name type="synonym">Buthus occitanus israelis</name>
    <dbReference type="NCBI Taxonomy" id="2899555"/>
    <lineage>
        <taxon>Eukaryota</taxon>
        <taxon>Metazoa</taxon>
        <taxon>Ecdysozoa</taxon>
        <taxon>Arthropoda</taxon>
        <taxon>Chelicerata</taxon>
        <taxon>Arachnida</taxon>
        <taxon>Scorpiones</taxon>
        <taxon>Buthida</taxon>
        <taxon>Buthoidea</taxon>
        <taxon>Buthidae</taxon>
        <taxon>Buthus</taxon>
    </lineage>
</organism>
<accession>B8XH45</accession>
<name>KA23L_BUTIS</name>
<comment type="function">
    <text evidence="1">May block potassium channels.</text>
</comment>
<comment type="subcellular location">
    <subcellularLocation>
        <location evidence="1">Secreted</location>
    </subcellularLocation>
</comment>
<comment type="tissue specificity">
    <text>Expressed by the venom gland.</text>
</comment>
<comment type="domain">
    <text evidence="3">Has the structural arrangement of an alpha-helix connected to antiparallel beta-sheets by disulfide bonds (CS-alpha/beta).</text>
</comment>
<comment type="similarity">
    <text evidence="3">Belongs to the short scorpion toxin superfamily. Potassium channel inhibitor family. Alpha-KTx 23 subfamily.</text>
</comment>
<comment type="caution">
    <text evidence="3">Has been classified as a the potassium channel toxin alpha-KTx 22.6 in PubMed:22230549. Since the subfamily 22 has already been attributed, this peptide should be reclassified as alpha-KTx 23.6.</text>
</comment>
<evidence type="ECO:0000250" key="1"/>
<evidence type="ECO:0000255" key="2"/>
<evidence type="ECO:0000305" key="3"/>